<comment type="function">
    <text evidence="1">Allows the formation of correctly charged Asn-tRNA(Asn) or Gln-tRNA(Gln) through the transamidation of misacylated Asp-tRNA(Asn) or Glu-tRNA(Gln) in organisms which lack either or both of asparaginyl-tRNA or glutaminyl-tRNA synthetases. The reaction takes place in the presence of glutamine and ATP through an activated phospho-Asp-tRNA(Asn) or phospho-Glu-tRNA(Gln).</text>
</comment>
<comment type="catalytic activity">
    <reaction evidence="1">
        <text>L-glutamyl-tRNA(Gln) + L-glutamine + ATP + H2O = L-glutaminyl-tRNA(Gln) + L-glutamate + ADP + phosphate + H(+)</text>
        <dbReference type="Rhea" id="RHEA:17521"/>
        <dbReference type="Rhea" id="RHEA-COMP:9681"/>
        <dbReference type="Rhea" id="RHEA-COMP:9684"/>
        <dbReference type="ChEBI" id="CHEBI:15377"/>
        <dbReference type="ChEBI" id="CHEBI:15378"/>
        <dbReference type="ChEBI" id="CHEBI:29985"/>
        <dbReference type="ChEBI" id="CHEBI:30616"/>
        <dbReference type="ChEBI" id="CHEBI:43474"/>
        <dbReference type="ChEBI" id="CHEBI:58359"/>
        <dbReference type="ChEBI" id="CHEBI:78520"/>
        <dbReference type="ChEBI" id="CHEBI:78521"/>
        <dbReference type="ChEBI" id="CHEBI:456216"/>
    </reaction>
</comment>
<comment type="catalytic activity">
    <reaction evidence="1">
        <text>L-aspartyl-tRNA(Asn) + L-glutamine + ATP + H2O = L-asparaginyl-tRNA(Asn) + L-glutamate + ADP + phosphate + 2 H(+)</text>
        <dbReference type="Rhea" id="RHEA:14513"/>
        <dbReference type="Rhea" id="RHEA-COMP:9674"/>
        <dbReference type="Rhea" id="RHEA-COMP:9677"/>
        <dbReference type="ChEBI" id="CHEBI:15377"/>
        <dbReference type="ChEBI" id="CHEBI:15378"/>
        <dbReference type="ChEBI" id="CHEBI:29985"/>
        <dbReference type="ChEBI" id="CHEBI:30616"/>
        <dbReference type="ChEBI" id="CHEBI:43474"/>
        <dbReference type="ChEBI" id="CHEBI:58359"/>
        <dbReference type="ChEBI" id="CHEBI:78515"/>
        <dbReference type="ChEBI" id="CHEBI:78516"/>
        <dbReference type="ChEBI" id="CHEBI:456216"/>
    </reaction>
</comment>
<comment type="subunit">
    <text evidence="1">Heterotrimer of A, B and C subunits.</text>
</comment>
<comment type="similarity">
    <text evidence="1">Belongs to the GatC family.</text>
</comment>
<accession>Q5HN33</accession>
<evidence type="ECO:0000255" key="1">
    <source>
        <dbReference type="HAMAP-Rule" id="MF_00122"/>
    </source>
</evidence>
<protein>
    <recommendedName>
        <fullName evidence="1">Aspartyl/glutamyl-tRNA(Asn/Gln) amidotransferase subunit C</fullName>
        <shortName evidence="1">Asp/Glu-ADT subunit C</shortName>
        <ecNumber evidence="1">6.3.5.-</ecNumber>
    </recommendedName>
</protein>
<reference key="1">
    <citation type="journal article" date="2005" name="J. Bacteriol.">
        <title>Insights on evolution of virulence and resistance from the complete genome analysis of an early methicillin-resistant Staphylococcus aureus strain and a biofilm-producing methicillin-resistant Staphylococcus epidermidis strain.</title>
        <authorList>
            <person name="Gill S.R."/>
            <person name="Fouts D.E."/>
            <person name="Archer G.L."/>
            <person name="Mongodin E.F."/>
            <person name="DeBoy R.T."/>
            <person name="Ravel J."/>
            <person name="Paulsen I.T."/>
            <person name="Kolonay J.F."/>
            <person name="Brinkac L.M."/>
            <person name="Beanan M.J."/>
            <person name="Dodson R.J."/>
            <person name="Daugherty S.C."/>
            <person name="Madupu R."/>
            <person name="Angiuoli S.V."/>
            <person name="Durkin A.S."/>
            <person name="Haft D.H."/>
            <person name="Vamathevan J.J."/>
            <person name="Khouri H."/>
            <person name="Utterback T.R."/>
            <person name="Lee C."/>
            <person name="Dimitrov G."/>
            <person name="Jiang L."/>
            <person name="Qin H."/>
            <person name="Weidman J."/>
            <person name="Tran K."/>
            <person name="Kang K.H."/>
            <person name="Hance I.R."/>
            <person name="Nelson K.E."/>
            <person name="Fraser C.M."/>
        </authorList>
    </citation>
    <scope>NUCLEOTIDE SEQUENCE [LARGE SCALE GENOMIC DNA]</scope>
    <source>
        <strain>ATCC 35984 / DSM 28319 / BCRC 17069 / CCUG 31568 / BM 3577 / RP62A</strain>
    </source>
</reference>
<name>GATC_STAEQ</name>
<organism>
    <name type="scientific">Staphylococcus epidermidis (strain ATCC 35984 / DSM 28319 / BCRC 17069 / CCUG 31568 / BM 3577 / RP62A)</name>
    <dbReference type="NCBI Taxonomy" id="176279"/>
    <lineage>
        <taxon>Bacteria</taxon>
        <taxon>Bacillati</taxon>
        <taxon>Bacillota</taxon>
        <taxon>Bacilli</taxon>
        <taxon>Bacillales</taxon>
        <taxon>Staphylococcaceae</taxon>
        <taxon>Staphylococcus</taxon>
    </lineage>
</organism>
<dbReference type="EC" id="6.3.5.-" evidence="1"/>
<dbReference type="EMBL" id="CP000029">
    <property type="protein sequence ID" value="AAW54819.1"/>
    <property type="molecule type" value="Genomic_DNA"/>
</dbReference>
<dbReference type="RefSeq" id="WP_002457086.1">
    <property type="nucleotide sequence ID" value="NC_002976.3"/>
</dbReference>
<dbReference type="SMR" id="Q5HN33"/>
<dbReference type="STRING" id="176279.SERP1439"/>
<dbReference type="GeneID" id="50018314"/>
<dbReference type="KEGG" id="ser:SERP1439"/>
<dbReference type="eggNOG" id="COG0721">
    <property type="taxonomic scope" value="Bacteria"/>
</dbReference>
<dbReference type="HOGENOM" id="CLU_105899_1_2_9"/>
<dbReference type="Proteomes" id="UP000000531">
    <property type="component" value="Chromosome"/>
</dbReference>
<dbReference type="GO" id="GO:0050566">
    <property type="term" value="F:asparaginyl-tRNA synthase (glutamine-hydrolyzing) activity"/>
    <property type="evidence" value="ECO:0007669"/>
    <property type="project" value="RHEA"/>
</dbReference>
<dbReference type="GO" id="GO:0005524">
    <property type="term" value="F:ATP binding"/>
    <property type="evidence" value="ECO:0007669"/>
    <property type="project" value="UniProtKB-KW"/>
</dbReference>
<dbReference type="GO" id="GO:0050567">
    <property type="term" value="F:glutaminyl-tRNA synthase (glutamine-hydrolyzing) activity"/>
    <property type="evidence" value="ECO:0007669"/>
    <property type="project" value="UniProtKB-UniRule"/>
</dbReference>
<dbReference type="GO" id="GO:0070681">
    <property type="term" value="P:glutaminyl-tRNAGln biosynthesis via transamidation"/>
    <property type="evidence" value="ECO:0007669"/>
    <property type="project" value="TreeGrafter"/>
</dbReference>
<dbReference type="GO" id="GO:0006450">
    <property type="term" value="P:regulation of translational fidelity"/>
    <property type="evidence" value="ECO:0007669"/>
    <property type="project" value="InterPro"/>
</dbReference>
<dbReference type="GO" id="GO:0006412">
    <property type="term" value="P:translation"/>
    <property type="evidence" value="ECO:0007669"/>
    <property type="project" value="UniProtKB-UniRule"/>
</dbReference>
<dbReference type="Gene3D" id="1.10.20.60">
    <property type="entry name" value="Glu-tRNAGln amidotransferase C subunit, N-terminal domain"/>
    <property type="match status" value="1"/>
</dbReference>
<dbReference type="HAMAP" id="MF_00122">
    <property type="entry name" value="GatC"/>
    <property type="match status" value="1"/>
</dbReference>
<dbReference type="InterPro" id="IPR036113">
    <property type="entry name" value="Asp/Glu-ADT_sf_sub_c"/>
</dbReference>
<dbReference type="InterPro" id="IPR003837">
    <property type="entry name" value="GatC"/>
</dbReference>
<dbReference type="NCBIfam" id="TIGR00135">
    <property type="entry name" value="gatC"/>
    <property type="match status" value="1"/>
</dbReference>
<dbReference type="PANTHER" id="PTHR15004">
    <property type="entry name" value="GLUTAMYL-TRNA(GLN) AMIDOTRANSFERASE SUBUNIT C, MITOCHONDRIAL"/>
    <property type="match status" value="1"/>
</dbReference>
<dbReference type="PANTHER" id="PTHR15004:SF0">
    <property type="entry name" value="GLUTAMYL-TRNA(GLN) AMIDOTRANSFERASE SUBUNIT C, MITOCHONDRIAL"/>
    <property type="match status" value="1"/>
</dbReference>
<dbReference type="Pfam" id="PF02686">
    <property type="entry name" value="GatC"/>
    <property type="match status" value="1"/>
</dbReference>
<dbReference type="SUPFAM" id="SSF141000">
    <property type="entry name" value="Glu-tRNAGln amidotransferase C subunit"/>
    <property type="match status" value="1"/>
</dbReference>
<sequence length="100" mass="11182">MTKVTREEVEHIANLARLQISPEETEEMANTLESILDFAKQNDSADTEGIEPTYHVLDLQNVLRDDKAIEGIPQELALKNAKETEDGQFKVPSIMNGEDA</sequence>
<gene>
    <name evidence="1" type="primary">gatC</name>
    <name type="ordered locus">SERP1439</name>
</gene>
<feature type="chain" id="PRO_0000105337" description="Aspartyl/glutamyl-tRNA(Asn/Gln) amidotransferase subunit C">
    <location>
        <begin position="1"/>
        <end position="100"/>
    </location>
</feature>
<keyword id="KW-0067">ATP-binding</keyword>
<keyword id="KW-0436">Ligase</keyword>
<keyword id="KW-0547">Nucleotide-binding</keyword>
<keyword id="KW-0648">Protein biosynthesis</keyword>
<keyword id="KW-1185">Reference proteome</keyword>
<proteinExistence type="inferred from homology"/>